<protein>
    <recommendedName>
        <fullName evidence="1">Aminomethyltransferase</fullName>
        <ecNumber evidence="1">2.1.2.10</ecNumber>
    </recommendedName>
    <alternativeName>
        <fullName evidence="1">Glycine cleavage system T protein</fullName>
    </alternativeName>
</protein>
<keyword id="KW-0032">Aminotransferase</keyword>
<keyword id="KW-1185">Reference proteome</keyword>
<keyword id="KW-0808">Transferase</keyword>
<sequence>MAQQTPLYEQHTLCGARMVDFHGWMMPLHYGSQIDEHHEVRTDAGMFDVSHMTIVDLRGSRTREFLRYLLANDVAKLTKSGKALYSGMLNASGGVIDDLIVYYFTEDFFRLVVNSATREKDLSWITQHAEPFGIEITVRDDLSMIAVQGPNAQAKAATLFNDAQRQAVEGMKPFFGVQAGDLFIATTGYTGEAGYEIALPNEKAADFWRALVEGGVKPCGLGARDTLRLEAGMNLYGQEMDETISPLAANMGWTIAWEPADRDFIGREALEVQREHGTEKLVGLVMTEKGVLRNELPVRFTDAQGNQHEGIITSGTFSPTLGYSIALARVPKGIGETAIVQIRNREMPVKVTKPVFVRNGKAVA</sequence>
<evidence type="ECO:0000255" key="1">
    <source>
        <dbReference type="HAMAP-Rule" id="MF_00259"/>
    </source>
</evidence>
<reference key="1">
    <citation type="journal article" date="2001" name="Nature">
        <title>Genome sequence of enterohaemorrhagic Escherichia coli O157:H7.</title>
        <authorList>
            <person name="Perna N.T."/>
            <person name="Plunkett G. III"/>
            <person name="Burland V."/>
            <person name="Mau B."/>
            <person name="Glasner J.D."/>
            <person name="Rose D.J."/>
            <person name="Mayhew G.F."/>
            <person name="Evans P.S."/>
            <person name="Gregor J."/>
            <person name="Kirkpatrick H.A."/>
            <person name="Posfai G."/>
            <person name="Hackett J."/>
            <person name="Klink S."/>
            <person name="Boutin A."/>
            <person name="Shao Y."/>
            <person name="Miller L."/>
            <person name="Grotbeck E.J."/>
            <person name="Davis N.W."/>
            <person name="Lim A."/>
            <person name="Dimalanta E.T."/>
            <person name="Potamousis K."/>
            <person name="Apodaca J."/>
            <person name="Anantharaman T.S."/>
            <person name="Lin J."/>
            <person name="Yen G."/>
            <person name="Schwartz D.C."/>
            <person name="Welch R.A."/>
            <person name="Blattner F.R."/>
        </authorList>
    </citation>
    <scope>NUCLEOTIDE SEQUENCE [LARGE SCALE GENOMIC DNA]</scope>
    <source>
        <strain>O157:H7 / EDL933 / ATCC 700927 / EHEC</strain>
    </source>
</reference>
<reference key="2">
    <citation type="journal article" date="2001" name="DNA Res.">
        <title>Complete genome sequence of enterohemorrhagic Escherichia coli O157:H7 and genomic comparison with a laboratory strain K-12.</title>
        <authorList>
            <person name="Hayashi T."/>
            <person name="Makino K."/>
            <person name="Ohnishi M."/>
            <person name="Kurokawa K."/>
            <person name="Ishii K."/>
            <person name="Yokoyama K."/>
            <person name="Han C.-G."/>
            <person name="Ohtsubo E."/>
            <person name="Nakayama K."/>
            <person name="Murata T."/>
            <person name="Tanaka M."/>
            <person name="Tobe T."/>
            <person name="Iida T."/>
            <person name="Takami H."/>
            <person name="Honda T."/>
            <person name="Sasakawa C."/>
            <person name="Ogasawara N."/>
            <person name="Yasunaga T."/>
            <person name="Kuhara S."/>
            <person name="Shiba T."/>
            <person name="Hattori M."/>
            <person name="Shinagawa H."/>
        </authorList>
    </citation>
    <scope>NUCLEOTIDE SEQUENCE [LARGE SCALE GENOMIC DNA]</scope>
    <source>
        <strain>O157:H7 / Sakai / RIMD 0509952 / EHEC</strain>
    </source>
</reference>
<accession>Q8XD32</accession>
<feature type="chain" id="PRO_0000122556" description="Aminomethyltransferase">
    <location>
        <begin position="1"/>
        <end position="364"/>
    </location>
</feature>
<proteinExistence type="inferred from homology"/>
<organism>
    <name type="scientific">Escherichia coli O157:H7</name>
    <dbReference type="NCBI Taxonomy" id="83334"/>
    <lineage>
        <taxon>Bacteria</taxon>
        <taxon>Pseudomonadati</taxon>
        <taxon>Pseudomonadota</taxon>
        <taxon>Gammaproteobacteria</taxon>
        <taxon>Enterobacterales</taxon>
        <taxon>Enterobacteriaceae</taxon>
        <taxon>Escherichia</taxon>
    </lineage>
</organism>
<gene>
    <name evidence="1" type="primary">gcvT</name>
    <name type="ordered locus">Z4242</name>
    <name type="ordered locus">ECs3776</name>
</gene>
<dbReference type="EC" id="2.1.2.10" evidence="1"/>
<dbReference type="EMBL" id="AE005174">
    <property type="protein sequence ID" value="AAG58032.1"/>
    <property type="molecule type" value="Genomic_DNA"/>
</dbReference>
<dbReference type="EMBL" id="BA000007">
    <property type="protein sequence ID" value="BAB37199.1"/>
    <property type="molecule type" value="Genomic_DNA"/>
</dbReference>
<dbReference type="PIR" id="D85946">
    <property type="entry name" value="D85946"/>
</dbReference>
<dbReference type="PIR" id="H91100">
    <property type="entry name" value="H91100"/>
</dbReference>
<dbReference type="RefSeq" id="NP_311803.1">
    <property type="nucleotide sequence ID" value="NC_002695.1"/>
</dbReference>
<dbReference type="RefSeq" id="WP_000068725.1">
    <property type="nucleotide sequence ID" value="NZ_VOAI01000003.1"/>
</dbReference>
<dbReference type="SMR" id="Q8XD32"/>
<dbReference type="STRING" id="155864.Z4242"/>
<dbReference type="GeneID" id="916404"/>
<dbReference type="KEGG" id="ece:Z4242"/>
<dbReference type="KEGG" id="ecs:ECs_3776"/>
<dbReference type="PATRIC" id="fig|386585.9.peg.3941"/>
<dbReference type="eggNOG" id="COG0404">
    <property type="taxonomic scope" value="Bacteria"/>
</dbReference>
<dbReference type="HOGENOM" id="CLU_007884_10_2_6"/>
<dbReference type="OMA" id="MPVQYPA"/>
<dbReference type="Proteomes" id="UP000000558">
    <property type="component" value="Chromosome"/>
</dbReference>
<dbReference type="Proteomes" id="UP000002519">
    <property type="component" value="Chromosome"/>
</dbReference>
<dbReference type="GO" id="GO:0005829">
    <property type="term" value="C:cytosol"/>
    <property type="evidence" value="ECO:0007669"/>
    <property type="project" value="TreeGrafter"/>
</dbReference>
<dbReference type="GO" id="GO:0005960">
    <property type="term" value="C:glycine cleavage complex"/>
    <property type="evidence" value="ECO:0007669"/>
    <property type="project" value="InterPro"/>
</dbReference>
<dbReference type="GO" id="GO:0004047">
    <property type="term" value="F:aminomethyltransferase activity"/>
    <property type="evidence" value="ECO:0007669"/>
    <property type="project" value="UniProtKB-UniRule"/>
</dbReference>
<dbReference type="GO" id="GO:0008483">
    <property type="term" value="F:transaminase activity"/>
    <property type="evidence" value="ECO:0007669"/>
    <property type="project" value="UniProtKB-KW"/>
</dbReference>
<dbReference type="GO" id="GO:0019464">
    <property type="term" value="P:glycine decarboxylation via glycine cleavage system"/>
    <property type="evidence" value="ECO:0007669"/>
    <property type="project" value="UniProtKB-UniRule"/>
</dbReference>
<dbReference type="FunFam" id="2.40.30.110:FF:000001">
    <property type="entry name" value="Aminomethyltransferase"/>
    <property type="match status" value="1"/>
</dbReference>
<dbReference type="FunFam" id="3.30.70.1400:FF:000001">
    <property type="entry name" value="Aminomethyltransferase"/>
    <property type="match status" value="1"/>
</dbReference>
<dbReference type="FunFam" id="4.10.1250.10:FF:000001">
    <property type="entry name" value="Aminomethyltransferase"/>
    <property type="match status" value="1"/>
</dbReference>
<dbReference type="Gene3D" id="2.40.30.110">
    <property type="entry name" value="Aminomethyltransferase beta-barrel domains"/>
    <property type="match status" value="1"/>
</dbReference>
<dbReference type="Gene3D" id="3.30.70.1400">
    <property type="entry name" value="Aminomethyltransferase beta-barrel domains"/>
    <property type="match status" value="1"/>
</dbReference>
<dbReference type="Gene3D" id="4.10.1250.10">
    <property type="entry name" value="Aminomethyltransferase fragment"/>
    <property type="match status" value="1"/>
</dbReference>
<dbReference type="Gene3D" id="3.30.1360.120">
    <property type="entry name" value="Probable tRNA modification gtpase trme, domain 1"/>
    <property type="match status" value="1"/>
</dbReference>
<dbReference type="HAMAP" id="MF_00259">
    <property type="entry name" value="GcvT"/>
    <property type="match status" value="1"/>
</dbReference>
<dbReference type="InterPro" id="IPR006223">
    <property type="entry name" value="GCS_T"/>
</dbReference>
<dbReference type="InterPro" id="IPR022903">
    <property type="entry name" value="GCS_T_bac"/>
</dbReference>
<dbReference type="InterPro" id="IPR013977">
    <property type="entry name" value="GCST_C"/>
</dbReference>
<dbReference type="InterPro" id="IPR006222">
    <property type="entry name" value="GCV_T_N"/>
</dbReference>
<dbReference type="InterPro" id="IPR028896">
    <property type="entry name" value="GcvT/YgfZ/DmdA"/>
</dbReference>
<dbReference type="InterPro" id="IPR029043">
    <property type="entry name" value="GcvT/YgfZ_C"/>
</dbReference>
<dbReference type="InterPro" id="IPR027266">
    <property type="entry name" value="TrmE/GcvT_dom1"/>
</dbReference>
<dbReference type="NCBIfam" id="TIGR00528">
    <property type="entry name" value="gcvT"/>
    <property type="match status" value="1"/>
</dbReference>
<dbReference type="NCBIfam" id="NF001567">
    <property type="entry name" value="PRK00389.1"/>
    <property type="match status" value="1"/>
</dbReference>
<dbReference type="PANTHER" id="PTHR43757">
    <property type="entry name" value="AMINOMETHYLTRANSFERASE"/>
    <property type="match status" value="1"/>
</dbReference>
<dbReference type="PANTHER" id="PTHR43757:SF2">
    <property type="entry name" value="AMINOMETHYLTRANSFERASE, MITOCHONDRIAL"/>
    <property type="match status" value="1"/>
</dbReference>
<dbReference type="Pfam" id="PF01571">
    <property type="entry name" value="GCV_T"/>
    <property type="match status" value="1"/>
</dbReference>
<dbReference type="Pfam" id="PF08669">
    <property type="entry name" value="GCV_T_C"/>
    <property type="match status" value="1"/>
</dbReference>
<dbReference type="PIRSF" id="PIRSF006487">
    <property type="entry name" value="GcvT"/>
    <property type="match status" value="1"/>
</dbReference>
<dbReference type="SUPFAM" id="SSF101790">
    <property type="entry name" value="Aminomethyltransferase beta-barrel domain"/>
    <property type="match status" value="1"/>
</dbReference>
<dbReference type="SUPFAM" id="SSF103025">
    <property type="entry name" value="Folate-binding domain"/>
    <property type="match status" value="1"/>
</dbReference>
<comment type="function">
    <text evidence="1">The glycine cleavage system catalyzes the degradation of glycine.</text>
</comment>
<comment type="catalytic activity">
    <reaction evidence="1">
        <text>N(6)-[(R)-S(8)-aminomethyldihydrolipoyl]-L-lysyl-[protein] + (6S)-5,6,7,8-tetrahydrofolate = N(6)-[(R)-dihydrolipoyl]-L-lysyl-[protein] + (6R)-5,10-methylene-5,6,7,8-tetrahydrofolate + NH4(+)</text>
        <dbReference type="Rhea" id="RHEA:16945"/>
        <dbReference type="Rhea" id="RHEA-COMP:10475"/>
        <dbReference type="Rhea" id="RHEA-COMP:10492"/>
        <dbReference type="ChEBI" id="CHEBI:15636"/>
        <dbReference type="ChEBI" id="CHEBI:28938"/>
        <dbReference type="ChEBI" id="CHEBI:57453"/>
        <dbReference type="ChEBI" id="CHEBI:83100"/>
        <dbReference type="ChEBI" id="CHEBI:83143"/>
        <dbReference type="EC" id="2.1.2.10"/>
    </reaction>
</comment>
<comment type="subunit">
    <text evidence="1">The glycine cleavage system is composed of four proteins: P, T, L and H.</text>
</comment>
<comment type="similarity">
    <text evidence="1">Belongs to the GcvT family.</text>
</comment>
<name>GCST_ECO57</name>